<organism>
    <name type="scientific">Escherichia coli (strain SMS-3-5 / SECEC)</name>
    <dbReference type="NCBI Taxonomy" id="439855"/>
    <lineage>
        <taxon>Bacteria</taxon>
        <taxon>Pseudomonadati</taxon>
        <taxon>Pseudomonadota</taxon>
        <taxon>Gammaproteobacteria</taxon>
        <taxon>Enterobacterales</taxon>
        <taxon>Enterobacteriaceae</taxon>
        <taxon>Escherichia</taxon>
    </lineage>
</organism>
<comment type="catalytic activity">
    <reaction evidence="1">
        <text>D-ribulose + ATP = D-ribulose 5-phosphate + ADP + H(+)</text>
        <dbReference type="Rhea" id="RHEA:17601"/>
        <dbReference type="ChEBI" id="CHEBI:15378"/>
        <dbReference type="ChEBI" id="CHEBI:17173"/>
        <dbReference type="ChEBI" id="CHEBI:30616"/>
        <dbReference type="ChEBI" id="CHEBI:58121"/>
        <dbReference type="ChEBI" id="CHEBI:456216"/>
        <dbReference type="EC" id="2.7.1.16"/>
    </reaction>
</comment>
<comment type="catalytic activity">
    <reaction evidence="1">
        <text>L-ribulose + ATP = L-ribulose 5-phosphate + ADP + H(+)</text>
        <dbReference type="Rhea" id="RHEA:22072"/>
        <dbReference type="ChEBI" id="CHEBI:15378"/>
        <dbReference type="ChEBI" id="CHEBI:16880"/>
        <dbReference type="ChEBI" id="CHEBI:30616"/>
        <dbReference type="ChEBI" id="CHEBI:58226"/>
        <dbReference type="ChEBI" id="CHEBI:456216"/>
        <dbReference type="EC" id="2.7.1.16"/>
    </reaction>
</comment>
<comment type="pathway">
    <text evidence="1">Carbohydrate degradation; L-arabinose degradation via L-ribulose; D-xylulose 5-phosphate from L-arabinose (bacterial route): step 2/3.</text>
</comment>
<comment type="similarity">
    <text evidence="1">Belongs to the ribulokinase family.</text>
</comment>
<feature type="chain" id="PRO_1000127632" description="Ribulokinase">
    <location>
        <begin position="1"/>
        <end position="566"/>
    </location>
</feature>
<protein>
    <recommendedName>
        <fullName evidence="1">Ribulokinase</fullName>
        <ecNumber evidence="1">2.7.1.16</ecNumber>
    </recommendedName>
</protein>
<accession>B1LFZ7</accession>
<gene>
    <name evidence="1" type="primary">araB</name>
    <name type="ordered locus">EcSMS35_0065</name>
</gene>
<sequence length="566" mass="61213">MAIAIGLDFGSDSVRALAVDCATGEEIATSVEWYPRWQKGQFCDAPNNQFRHHPRDYIESMEAALKTVLAELSAEQRAAVVGIGVDTTGSTPAPIDADGNVLALRPEFAENPNAMFVLWKDHTAVEEAEEITRLCHTPGNVDYSRYIGGIYSSEWFWAKILHVTRQDSAVAQSAASWIELCDWVPALLSGTTRPQDIRRGRCSAGHKSLWHESWGGLPPASFFDELDPILNRHLPSPLFTDTWTADIPVGTLCPEWAQRLGLPESVVISGGAFDCHMGAVGAGAQPNALVKVIGTSTCDILIADKQSVGERAVKGICGQVDGSVVPGFIGLEAGQSAFGDIYAWFGRVLGWPLEQLAAQHPELKEQINASQKQLLPALTEAWAKNPSLDHLPVVLDWFNGRRTPNANQRLKGVITDLNLATDAPLLFGGLIAATAFGARAIMECFTDQGIAVNNVMALGGIARKNQVIMQACCDVLNRPLQIVASDQCCALGAAIFAAVAAKVHADIPSAQQKMASAVEKTLQPRSEQAQRFEQLYRRYQQWAMSAEQHYLPTSAPAQAAQAVPTL</sequence>
<evidence type="ECO:0000255" key="1">
    <source>
        <dbReference type="HAMAP-Rule" id="MF_00520"/>
    </source>
</evidence>
<reference key="1">
    <citation type="journal article" date="2008" name="J. Bacteriol.">
        <title>Insights into the environmental resistance gene pool from the genome sequence of the multidrug-resistant environmental isolate Escherichia coli SMS-3-5.</title>
        <authorList>
            <person name="Fricke W.F."/>
            <person name="Wright M.S."/>
            <person name="Lindell A.H."/>
            <person name="Harkins D.M."/>
            <person name="Baker-Austin C."/>
            <person name="Ravel J."/>
            <person name="Stepanauskas R."/>
        </authorList>
    </citation>
    <scope>NUCLEOTIDE SEQUENCE [LARGE SCALE GENOMIC DNA]</scope>
    <source>
        <strain>SMS-3-5 / SECEC</strain>
    </source>
</reference>
<proteinExistence type="inferred from homology"/>
<name>ARAB_ECOSM</name>
<keyword id="KW-0054">Arabinose catabolism</keyword>
<keyword id="KW-0067">ATP-binding</keyword>
<keyword id="KW-0119">Carbohydrate metabolism</keyword>
<keyword id="KW-0418">Kinase</keyword>
<keyword id="KW-0547">Nucleotide-binding</keyword>
<keyword id="KW-0808">Transferase</keyword>
<dbReference type="EC" id="2.7.1.16" evidence="1"/>
<dbReference type="EMBL" id="CP000970">
    <property type="protein sequence ID" value="ACB19791.1"/>
    <property type="molecule type" value="Genomic_DNA"/>
</dbReference>
<dbReference type="RefSeq" id="WP_000951845.1">
    <property type="nucleotide sequence ID" value="NC_010498.1"/>
</dbReference>
<dbReference type="SMR" id="B1LFZ7"/>
<dbReference type="KEGG" id="ecm:EcSMS35_0065"/>
<dbReference type="HOGENOM" id="CLU_009281_9_1_6"/>
<dbReference type="UniPathway" id="UPA00145">
    <property type="reaction ID" value="UER00566"/>
</dbReference>
<dbReference type="Proteomes" id="UP000007011">
    <property type="component" value="Chromosome"/>
</dbReference>
<dbReference type="GO" id="GO:0005737">
    <property type="term" value="C:cytoplasm"/>
    <property type="evidence" value="ECO:0007669"/>
    <property type="project" value="TreeGrafter"/>
</dbReference>
<dbReference type="GO" id="GO:0005524">
    <property type="term" value="F:ATP binding"/>
    <property type="evidence" value="ECO:0007669"/>
    <property type="project" value="UniProtKB-KW"/>
</dbReference>
<dbReference type="GO" id="GO:0019150">
    <property type="term" value="F:D-ribulokinase activity"/>
    <property type="evidence" value="ECO:0007669"/>
    <property type="project" value="RHEA"/>
</dbReference>
<dbReference type="GO" id="GO:0008741">
    <property type="term" value="F:ribulokinase activity"/>
    <property type="evidence" value="ECO:0007669"/>
    <property type="project" value="UniProtKB-UniRule"/>
</dbReference>
<dbReference type="GO" id="GO:0019569">
    <property type="term" value="P:L-arabinose catabolic process to xylulose 5-phosphate"/>
    <property type="evidence" value="ECO:0007669"/>
    <property type="project" value="UniProtKB-UniRule"/>
</dbReference>
<dbReference type="CDD" id="cd07781">
    <property type="entry name" value="ASKHA_NBD_FGGY_L-RBK"/>
    <property type="match status" value="1"/>
</dbReference>
<dbReference type="Gene3D" id="1.20.58.2240">
    <property type="match status" value="1"/>
</dbReference>
<dbReference type="Gene3D" id="3.30.420.40">
    <property type="match status" value="1"/>
</dbReference>
<dbReference type="HAMAP" id="MF_00520">
    <property type="entry name" value="Ribulokinase"/>
    <property type="match status" value="1"/>
</dbReference>
<dbReference type="InterPro" id="IPR043129">
    <property type="entry name" value="ATPase_NBD"/>
</dbReference>
<dbReference type="InterPro" id="IPR018485">
    <property type="entry name" value="FGGY_C"/>
</dbReference>
<dbReference type="InterPro" id="IPR005929">
    <property type="entry name" value="Ribulokinase"/>
</dbReference>
<dbReference type="NCBIfam" id="TIGR01234">
    <property type="entry name" value="L-ribulokinase"/>
    <property type="match status" value="1"/>
</dbReference>
<dbReference type="NCBIfam" id="NF003154">
    <property type="entry name" value="PRK04123.1"/>
    <property type="match status" value="1"/>
</dbReference>
<dbReference type="PANTHER" id="PTHR43435:SF4">
    <property type="entry name" value="FGGY CARBOHYDRATE KINASE DOMAIN-CONTAINING PROTEIN"/>
    <property type="match status" value="1"/>
</dbReference>
<dbReference type="PANTHER" id="PTHR43435">
    <property type="entry name" value="RIBULOKINASE"/>
    <property type="match status" value="1"/>
</dbReference>
<dbReference type="Pfam" id="PF02782">
    <property type="entry name" value="FGGY_C"/>
    <property type="match status" value="1"/>
</dbReference>
<dbReference type="SUPFAM" id="SSF53067">
    <property type="entry name" value="Actin-like ATPase domain"/>
    <property type="match status" value="2"/>
</dbReference>